<gene>
    <name evidence="6" type="primary">Nhej1</name>
    <name evidence="3" type="synonym">Xlf</name>
</gene>
<organism>
    <name type="scientific">Rattus norvegicus</name>
    <name type="common">Rat</name>
    <dbReference type="NCBI Taxonomy" id="10116"/>
    <lineage>
        <taxon>Eukaryota</taxon>
        <taxon>Metazoa</taxon>
        <taxon>Chordata</taxon>
        <taxon>Craniata</taxon>
        <taxon>Vertebrata</taxon>
        <taxon>Euteleostomi</taxon>
        <taxon>Mammalia</taxon>
        <taxon>Eutheria</taxon>
        <taxon>Euarchontoglires</taxon>
        <taxon>Glires</taxon>
        <taxon>Rodentia</taxon>
        <taxon>Myomorpha</taxon>
        <taxon>Muroidea</taxon>
        <taxon>Muridae</taxon>
        <taxon>Murinae</taxon>
        <taxon>Rattus</taxon>
    </lineage>
</organism>
<protein>
    <recommendedName>
        <fullName evidence="5">Non-homologous end-joining factor 1</fullName>
    </recommendedName>
    <alternativeName>
        <fullName evidence="3">Protein cernunnos</fullName>
    </alternativeName>
    <alternativeName>
        <fullName evidence="3">XRCC4-like factor</fullName>
    </alternativeName>
</protein>
<dbReference type="EMBL" id="BC079033">
    <property type="protein sequence ID" value="AAH79033.1"/>
    <property type="molecule type" value="mRNA"/>
</dbReference>
<dbReference type="RefSeq" id="NP_001014239.1">
    <property type="nucleotide sequence ID" value="NM_001014217.2"/>
</dbReference>
<dbReference type="RefSeq" id="NP_001419694.1">
    <property type="nucleotide sequence ID" value="NM_001432765.1"/>
</dbReference>
<dbReference type="RefSeq" id="NP_001419695.1">
    <property type="nucleotide sequence ID" value="NM_001432766.1"/>
</dbReference>
<dbReference type="RefSeq" id="NP_001419696.1">
    <property type="nucleotide sequence ID" value="NM_001432767.1"/>
</dbReference>
<dbReference type="RefSeq" id="NP_001419697.1">
    <property type="nucleotide sequence ID" value="NM_001432768.1"/>
</dbReference>
<dbReference type="RefSeq" id="NP_001419698.1">
    <property type="nucleotide sequence ID" value="NM_001432769.1"/>
</dbReference>
<dbReference type="RefSeq" id="XP_006245302.1">
    <property type="nucleotide sequence ID" value="XM_006245240.1"/>
</dbReference>
<dbReference type="RefSeq" id="XP_006245303.1">
    <property type="nucleotide sequence ID" value="XM_006245241.3"/>
</dbReference>
<dbReference type="RefSeq" id="XP_006245304.1">
    <property type="nucleotide sequence ID" value="XM_006245242.3"/>
</dbReference>
<dbReference type="SMR" id="Q6AYI4"/>
<dbReference type="FunCoup" id="Q6AYI4">
    <property type="interactions" value="272"/>
</dbReference>
<dbReference type="STRING" id="10116.ENSRNOP00000024444"/>
<dbReference type="GlyGen" id="Q6AYI4">
    <property type="glycosylation" value="1 site"/>
</dbReference>
<dbReference type="iPTMnet" id="Q6AYI4"/>
<dbReference type="PhosphoSitePlus" id="Q6AYI4"/>
<dbReference type="PaxDb" id="10116-ENSRNOP00000024444"/>
<dbReference type="GeneID" id="363251"/>
<dbReference type="KEGG" id="rno:363251"/>
<dbReference type="UCSC" id="RGD:1359338">
    <property type="organism name" value="rat"/>
</dbReference>
<dbReference type="AGR" id="RGD:1359338"/>
<dbReference type="CTD" id="79840"/>
<dbReference type="RGD" id="1359338">
    <property type="gene designation" value="Nhej1"/>
</dbReference>
<dbReference type="VEuPathDB" id="HostDB:ENSRNOG00000018162"/>
<dbReference type="eggNOG" id="ENOG502S0R3">
    <property type="taxonomic scope" value="Eukaryota"/>
</dbReference>
<dbReference type="HOGENOM" id="CLU_076115_1_0_1"/>
<dbReference type="InParanoid" id="Q6AYI4"/>
<dbReference type="OMA" id="LPFYWHF"/>
<dbReference type="OrthoDB" id="2155935at2759"/>
<dbReference type="PhylomeDB" id="Q6AYI4"/>
<dbReference type="TreeFam" id="TF328567"/>
<dbReference type="Reactome" id="R-RNO-5693571">
    <property type="pathway name" value="Nonhomologous End-Joining (NHEJ)"/>
</dbReference>
<dbReference type="PRO" id="PR:Q6AYI4"/>
<dbReference type="Proteomes" id="UP000002494">
    <property type="component" value="Chromosome 9"/>
</dbReference>
<dbReference type="Bgee" id="ENSRNOG00000018162">
    <property type="expression patterns" value="Expressed in testis and 19 other cell types or tissues"/>
</dbReference>
<dbReference type="GO" id="GO:0032807">
    <property type="term" value="C:DNA ligase IV complex"/>
    <property type="evidence" value="ECO:0000318"/>
    <property type="project" value="GO_Central"/>
</dbReference>
<dbReference type="GO" id="GO:0005958">
    <property type="term" value="C:DNA-dependent protein kinase-DNA ligase 4 complex"/>
    <property type="evidence" value="ECO:0000250"/>
    <property type="project" value="UniProtKB"/>
</dbReference>
<dbReference type="GO" id="GO:0070419">
    <property type="term" value="C:nonhomologous end joining complex"/>
    <property type="evidence" value="ECO:0000250"/>
    <property type="project" value="UniProtKB"/>
</dbReference>
<dbReference type="GO" id="GO:0005634">
    <property type="term" value="C:nucleus"/>
    <property type="evidence" value="ECO:0000250"/>
    <property type="project" value="UniProtKB"/>
</dbReference>
<dbReference type="GO" id="GO:0035861">
    <property type="term" value="C:site of double-strand break"/>
    <property type="evidence" value="ECO:0000250"/>
    <property type="project" value="UniProtKB"/>
</dbReference>
<dbReference type="GO" id="GO:0045027">
    <property type="term" value="F:DNA end binding"/>
    <property type="evidence" value="ECO:0000250"/>
    <property type="project" value="UniProtKB"/>
</dbReference>
<dbReference type="GO" id="GO:0070182">
    <property type="term" value="F:DNA polymerase binding"/>
    <property type="evidence" value="ECO:0000266"/>
    <property type="project" value="RGD"/>
</dbReference>
<dbReference type="GO" id="GO:0030183">
    <property type="term" value="P:B cell differentiation"/>
    <property type="evidence" value="ECO:0000250"/>
    <property type="project" value="UniProtKB"/>
</dbReference>
<dbReference type="GO" id="GO:0006303">
    <property type="term" value="P:double-strand break repair via nonhomologous end joining"/>
    <property type="evidence" value="ECO:0000250"/>
    <property type="project" value="UniProtKB"/>
</dbReference>
<dbReference type="GO" id="GO:0033152">
    <property type="term" value="P:immunoglobulin V(D)J recombination"/>
    <property type="evidence" value="ECO:0000250"/>
    <property type="project" value="UniProtKB"/>
</dbReference>
<dbReference type="GO" id="GO:0010212">
    <property type="term" value="P:response to ionizing radiation"/>
    <property type="evidence" value="ECO:0000250"/>
    <property type="project" value="UniProtKB"/>
</dbReference>
<dbReference type="GO" id="GO:0030217">
    <property type="term" value="P:T cell differentiation"/>
    <property type="evidence" value="ECO:0000250"/>
    <property type="project" value="UniProtKB"/>
</dbReference>
<dbReference type="GO" id="GO:0000723">
    <property type="term" value="P:telomere maintenance"/>
    <property type="evidence" value="ECO:0000250"/>
    <property type="project" value="UniProtKB"/>
</dbReference>
<dbReference type="CDD" id="cd22285">
    <property type="entry name" value="HD_XLF_N"/>
    <property type="match status" value="1"/>
</dbReference>
<dbReference type="FunFam" id="1.10.287.450:FF:000003">
    <property type="entry name" value="Non-homologous end-joining factor 1"/>
    <property type="match status" value="1"/>
</dbReference>
<dbReference type="FunFam" id="2.170.210.10:FF:000001">
    <property type="entry name" value="Non-homologous end-joining factor 1"/>
    <property type="match status" value="1"/>
</dbReference>
<dbReference type="Gene3D" id="2.170.210.10">
    <property type="entry name" value="DNA double-strand break repair and VJ recombination XRCC4, N-terminal"/>
    <property type="match status" value="1"/>
</dbReference>
<dbReference type="Gene3D" id="1.10.287.450">
    <property type="entry name" value="Helix hairpin bin"/>
    <property type="match status" value="1"/>
</dbReference>
<dbReference type="InterPro" id="IPR052287">
    <property type="entry name" value="NHEJ_factor"/>
</dbReference>
<dbReference type="InterPro" id="IPR053829">
    <property type="entry name" value="XLF-like_CC"/>
</dbReference>
<dbReference type="InterPro" id="IPR015381">
    <property type="entry name" value="XLF-like_N"/>
</dbReference>
<dbReference type="InterPro" id="IPR038051">
    <property type="entry name" value="XRCC4-like_N_sf"/>
</dbReference>
<dbReference type="PANTHER" id="PTHR32235">
    <property type="entry name" value="NON-HOMOLOGOUS END-JOINING FACTOR 1"/>
    <property type="match status" value="1"/>
</dbReference>
<dbReference type="PANTHER" id="PTHR32235:SF1">
    <property type="entry name" value="NON-HOMOLOGOUS END-JOINING FACTOR 1"/>
    <property type="match status" value="1"/>
</dbReference>
<dbReference type="Pfam" id="PF09302">
    <property type="entry name" value="XLF"/>
    <property type="match status" value="1"/>
</dbReference>
<dbReference type="Pfam" id="PF21928">
    <property type="entry name" value="XLF_CC"/>
    <property type="match status" value="1"/>
</dbReference>
<comment type="function">
    <text evidence="1 3">DNA repair protein involved in DNA non-homologous end joining (NHEJ); it is required for double-strand break (DSB) repair and V(D)J recombination and is also involved in telomere maintenance. Plays a key role in NHEJ by promoting the ligation of various mismatched and non-cohesive ends. Together with PAXX, collaborates with DNA polymerase lambda (POLL) to promote joining of non-cohesive DNA ends. May act in concert with XRCC5-XRCC6 (Ku) to stimulate XRCC4-mediated joining of blunt ends and several types of mismatched ends that are non-complementary or partially complementary. In some studies, has been shown to associate with XRCC4 to form alternating helical filaments that bridge DNA and act like a bandage, holding together the broken DNA until it is repaired. Alternatively, it has also been shown that rather than forming filaments, a single nhej1 dimer interacts through both head domains with xrcc4 to promote the close alignment of DNA ends. The XRCC4-NHEJ1/XLF subcomplex binds to the DNA fragments of a DSB in a highly diffusive manner and robustly bridges two independent DNA molecules, holding the broken DNA fragments in close proximity to one other. The mobility of the bridges ensures that the ends remain accessible for further processing by other repair factors. Binds DNA in a length-dependent manner.</text>
</comment>
<comment type="subunit">
    <text evidence="3">Homodimer; mainly exists as a homodimer when not associated with XRCC4. Interacts with XRCC4; the interaction is direct and is mediated via a head-to-head interaction between N-terminal head regions. Component of the core long-range non-homologous end joining (NHEJ) complex (also named DNA-PK complex) composed of PRKDC, LIG4, XRCC4, XRCC6/Ku70, XRCC5/Ku86 and NHEJ1/XLF. Additional component of the NHEJ complex includes PAXX. Following autophosphorylation, PRKDC dissociates from DNA, leading to formation of the short-range NHEJ complex, composed of LIG4, XRCC4, XRCC6/Ku70, XRCC5/Ku86 and NHEJ1/XLF. Interacts with POLL (DNA polymerase lambda); promoting POLL recruitment to double-strand breaks (DSBs) and stimulation of the end-filling activity of POLL.</text>
</comment>
<comment type="subcellular location">
    <subcellularLocation>
        <location evidence="3">Nucleus</location>
    </subcellularLocation>
    <subcellularLocation>
        <location evidence="3">Chromosome</location>
    </subcellularLocation>
    <text evidence="3">Localizes to site of double-strand breaks; recruitment is dependent on XRCC5-XRCC6 (Ku) heterodimer.</text>
</comment>
<comment type="domain">
    <text evidence="3">The coiled-coil region mediates homodimerization.</text>
</comment>
<comment type="domain">
    <text evidence="3">The Leu-lock (Leu-120) site inserts into a hydrophobic pocket in XRCC4.</text>
</comment>
<comment type="domain">
    <text evidence="1">The XLM motif (also called the KBM motif or KBMX motif) and the interior region of the C-terminal tail preceding the XLM motif are essential for DNA end joining. The sequence of the C-terminal tail is not critical for its role in end joining but it must be sufficiently long to interact with XRCC4 and to stabilize the interaction of XRCC4 with LIG4. A single XLM motif and C-terminal tail is sufficient to promote end joining.</text>
</comment>
<comment type="PTM">
    <text evidence="3">Phosphorylated by PRKDC at the C-terminus in response to DNA damage. Phosphorylation by PRKDC at the C-terminus of XRCC4 and NHEJ1/XLF are highly redundant and regulate ability of the XRCC4-NHEJ1/XLF subcomplex to bridge DNA. Phosphorylation does not prevent interaction with XRCC4 but disrupts ability to bridge DNA and promotes detachment from DNA.</text>
</comment>
<comment type="similarity">
    <text evidence="5">Belongs to the XRCC4-XLF family. XLF subfamily.</text>
</comment>
<sequence length="304" mass="33885">MEELEQGLLMQPWAWLQLAENSLLAKASITKHGYALLISDLQQVWHEQVDTLEVSQRAKELNKRLTAPPAAFLHHLDEVLRPLFKDSAHQDAAHPSKATFSCDRGEEVLILRVRSELSGLPFNWHFHCLPASSLLVSQHLICPLMGVSLALHSHVRELAALLRMKDLEIQAYQESGAVLSRGRLKTEPFEENSFLEQFMVEKLPEACAVGDGRPFAMNLQSLYVAVTKQQVQARQKHKGSGEPQTSSSTSPQGTDSQLQNQPEQQISPTPTLSEPECEPMAASGPVHRAQLVKAKRKKPRGLFS</sequence>
<proteinExistence type="evidence at transcript level"/>
<keyword id="KW-0158">Chromosome</keyword>
<keyword id="KW-0175">Coiled coil</keyword>
<keyword id="KW-0227">DNA damage</keyword>
<keyword id="KW-0234">DNA repair</keyword>
<keyword id="KW-0238">DNA-binding</keyword>
<keyword id="KW-0539">Nucleus</keyword>
<keyword id="KW-0597">Phosphoprotein</keyword>
<keyword id="KW-1185">Reference proteome</keyword>
<name>NHEJ1_RAT</name>
<evidence type="ECO:0000250" key="1">
    <source>
        <dbReference type="UniProtKB" id="A0A1L8ENT6"/>
    </source>
</evidence>
<evidence type="ECO:0000250" key="2">
    <source>
        <dbReference type="UniProtKB" id="Q3KNJ2"/>
    </source>
</evidence>
<evidence type="ECO:0000250" key="3">
    <source>
        <dbReference type="UniProtKB" id="Q9H9Q4"/>
    </source>
</evidence>
<evidence type="ECO:0000256" key="4">
    <source>
        <dbReference type="SAM" id="MobiDB-lite"/>
    </source>
</evidence>
<evidence type="ECO:0000305" key="5"/>
<evidence type="ECO:0000312" key="6">
    <source>
        <dbReference type="RGD" id="1359338"/>
    </source>
</evidence>
<reference key="1">
    <citation type="journal article" date="2004" name="Genome Res.">
        <title>The status, quality, and expansion of the NIH full-length cDNA project: the Mammalian Gene Collection (MGC).</title>
        <authorList>
            <consortium name="The MGC Project Team"/>
        </authorList>
    </citation>
    <scope>NUCLEOTIDE SEQUENCE [LARGE SCALE MRNA]</scope>
    <source>
        <tissue>Testis</tissue>
    </source>
</reference>
<accession>Q6AYI4</accession>
<feature type="chain" id="PRO_0000228656" description="Non-homologous end-joining factor 1">
    <location>
        <begin position="1"/>
        <end position="304"/>
    </location>
</feature>
<feature type="region of interest" description="Globular head" evidence="3">
    <location>
        <begin position="1"/>
        <end position="140"/>
    </location>
</feature>
<feature type="region of interest" description="C-terminal tail" evidence="1">
    <location>
        <begin position="229"/>
        <end position="293"/>
    </location>
</feature>
<feature type="region of interest" description="Disordered" evidence="4">
    <location>
        <begin position="233"/>
        <end position="304"/>
    </location>
</feature>
<feature type="coiled-coil region" evidence="3">
    <location>
        <begin position="133"/>
        <end position="175"/>
    </location>
</feature>
<feature type="short sequence motif" description="XLM" evidence="3">
    <location>
        <begin position="294"/>
        <end position="304"/>
    </location>
</feature>
<feature type="compositionally biased region" description="Low complexity" evidence="4">
    <location>
        <begin position="241"/>
        <end position="257"/>
    </location>
</feature>
<feature type="compositionally biased region" description="Polar residues" evidence="4">
    <location>
        <begin position="258"/>
        <end position="272"/>
    </location>
</feature>
<feature type="compositionally biased region" description="Basic residues" evidence="4">
    <location>
        <begin position="293"/>
        <end position="304"/>
    </location>
</feature>
<feature type="site" description="Leu-lock" evidence="3">
    <location>
        <position position="120"/>
    </location>
</feature>
<feature type="modified residue" description="Phosphoserine" evidence="3">
    <location>
        <position position="137"/>
    </location>
</feature>
<feature type="modified residue" description="Phosphoserine" evidence="2">
    <location>
        <position position="250"/>
    </location>
</feature>
<feature type="modified residue" description="Phosphoserine" evidence="3">
    <location>
        <position position="256"/>
    </location>
</feature>
<feature type="modified residue" description="Phosphothreonine" evidence="3">
    <location>
        <position position="271"/>
    </location>
</feature>